<sequence>MKTNMQVKGRGGNMKANTNTQQVIFELKKKVVIALNKLADRDTYQRGVDELEKTVEHLAPDKVSCFLSCILDTDSEQKSAVRKECIRLMGTLARFHEGLVGPYLGKMVSSIVKRLKDPDSVVRDACIETMGVLASKMSCYEDQNFGVFVSLVKPLFEAIGDQNKYVQSGAALCLARVIDSSPEAPVAIIQRMLMRTVKLLNNSHFIAKPAVIELNRSIILAGGATSKSVLSSAMSSFQDALKNKDWTTRKAASVALMEIAATGEKFLGPLKASCICSLESCRFDKVKPVRDSVILALKYWKGVPGSDSPEPSETESSVKESYNGARESSELFSTSDFKVKDGMSIKYVTDVTRKKVPVSARQPPTRYNDDPRKSNQDDWHIEIAVPESSFVSKVDLYNEESEGSCITKTFAETTNTPEVTYEYIPMKDKADSYVTGGVNENDDIKSITVSSSSFRASGMVNPAITSKNYAAEETDLEEQPFSTQVKDRTSLDSFVTVSSSQINHDCCAKIANEMASVRKQLSDIENKQSRLIDQLQVFSTGIMNNFSVLQSKVSSLEYAVEGIAQNAALHSDISNSNFVKHNQGSTISPRLSSCTSRTSTDIRNRQSTLSTSKYSRENKTHVRSRLNESQGMEKTRSNPLGKTGQLHTREDIWNNIGQGRQTLIQTRTSSDSIQSIRQQYAEVMSGTRKPVTGVSCEDVVESEYLQVLSSGDELALVELLDRTGPVLESMSSQTINEILSILLSYLLERRFMNSILPWLHQVADLSTTNGANYLIPSARKRAQVLSAIQEASGMDFSNLAERRAVTQIAMKLRKLWGKCS</sequence>
<protein>
    <recommendedName>
        <fullName evidence="3">TORTIFOLIA1-like protein 2</fullName>
    </recommendedName>
</protein>
<name>TORL2_ARATH</name>
<reference key="1">
    <citation type="journal article" date="1999" name="Nature">
        <title>Sequence and analysis of chromosome 2 of the plant Arabidopsis thaliana.</title>
        <authorList>
            <person name="Lin X."/>
            <person name="Kaul S."/>
            <person name="Rounsley S.D."/>
            <person name="Shea T.P."/>
            <person name="Benito M.-I."/>
            <person name="Town C.D."/>
            <person name="Fujii C.Y."/>
            <person name="Mason T.M."/>
            <person name="Bowman C.L."/>
            <person name="Barnstead M.E."/>
            <person name="Feldblyum T.V."/>
            <person name="Buell C.R."/>
            <person name="Ketchum K.A."/>
            <person name="Lee J.J."/>
            <person name="Ronning C.M."/>
            <person name="Koo H.L."/>
            <person name="Moffat K.S."/>
            <person name="Cronin L.A."/>
            <person name="Shen M."/>
            <person name="Pai G."/>
            <person name="Van Aken S."/>
            <person name="Umayam L."/>
            <person name="Tallon L.J."/>
            <person name="Gill J.E."/>
            <person name="Adams M.D."/>
            <person name="Carrera A.J."/>
            <person name="Creasy T.H."/>
            <person name="Goodman H.M."/>
            <person name="Somerville C.R."/>
            <person name="Copenhaver G.P."/>
            <person name="Preuss D."/>
            <person name="Nierman W.C."/>
            <person name="White O."/>
            <person name="Eisen J.A."/>
            <person name="Salzberg S.L."/>
            <person name="Fraser C.M."/>
            <person name="Venter J.C."/>
        </authorList>
    </citation>
    <scope>NUCLEOTIDE SEQUENCE [LARGE SCALE GENOMIC DNA]</scope>
    <source>
        <strain>cv. Columbia</strain>
    </source>
</reference>
<reference key="2">
    <citation type="journal article" date="2017" name="Plant J.">
        <title>Araport11: a complete reannotation of the Arabidopsis thaliana reference genome.</title>
        <authorList>
            <person name="Cheng C.Y."/>
            <person name="Krishnakumar V."/>
            <person name="Chan A.P."/>
            <person name="Thibaud-Nissen F."/>
            <person name="Schobel S."/>
            <person name="Town C.D."/>
        </authorList>
    </citation>
    <scope>GENOME REANNOTATION</scope>
    <source>
        <strain>cv. Columbia</strain>
    </source>
</reference>
<reference key="3">
    <citation type="journal article" date="2004" name="Curr. Biol.">
        <title>Helical growth of the Arabidopsis mutant tortifolia1 reveals a plant-specific microtubule-associated protein.</title>
        <authorList>
            <person name="Buschmann H."/>
            <person name="Fabri C.O."/>
            <person name="Hauptmann M."/>
            <person name="Hutzler P."/>
            <person name="Laux T."/>
            <person name="Lloyd C.W."/>
            <person name="Schaeffner A.R."/>
        </authorList>
    </citation>
    <scope>GENE FAMILY</scope>
</reference>
<reference key="4">
    <citation type="journal article" date="2004" name="Plant Physiol.">
        <title>Plant-specific microtubule-associated protein SPIRAL2 is required for anisotropic growth in Arabidopsis.</title>
        <authorList>
            <person name="Shoji T."/>
            <person name="Narita N.N."/>
            <person name="Hayashi K."/>
            <person name="Asada J."/>
            <person name="Hamada T."/>
            <person name="Sonobe S."/>
            <person name="Nakajima K."/>
            <person name="Hashimoto T."/>
        </authorList>
    </citation>
    <scope>GENE FAMILY</scope>
</reference>
<gene>
    <name evidence="3" type="primary">TOR1L2</name>
    <name evidence="5" type="ordered locus">At2g07170</name>
    <name evidence="6" type="ORF">T25N22.13</name>
</gene>
<evidence type="ECO:0000255" key="1"/>
<evidence type="ECO:0000256" key="2">
    <source>
        <dbReference type="SAM" id="MobiDB-lite"/>
    </source>
</evidence>
<evidence type="ECO:0000303" key="3">
    <source>
    </source>
</evidence>
<evidence type="ECO:0000305" key="4"/>
<evidence type="ECO:0000312" key="5">
    <source>
        <dbReference type="Araport" id="AT2G07170"/>
    </source>
</evidence>
<evidence type="ECO:0000312" key="6">
    <source>
        <dbReference type="EMBL" id="AAC69120.1"/>
    </source>
</evidence>
<evidence type="ECO:0000312" key="7">
    <source>
        <dbReference type="Proteomes" id="UP000006548"/>
    </source>
</evidence>
<proteinExistence type="predicted"/>
<dbReference type="EMBL" id="AC005693">
    <property type="protein sequence ID" value="AAC69120.1"/>
    <property type="status" value="ALT_SEQ"/>
    <property type="molecule type" value="Genomic_DNA"/>
</dbReference>
<dbReference type="EMBL" id="CP002685">
    <property type="protein sequence ID" value="AEC06037.1"/>
    <property type="molecule type" value="Genomic_DNA"/>
</dbReference>
<dbReference type="PIR" id="H84482">
    <property type="entry name" value="H84482"/>
</dbReference>
<dbReference type="RefSeq" id="NP_178730.2">
    <property type="nucleotide sequence ID" value="NM_126689.4"/>
</dbReference>
<dbReference type="SMR" id="F4IK92"/>
<dbReference type="FunCoup" id="F4IK92">
    <property type="interactions" value="471"/>
</dbReference>
<dbReference type="iPTMnet" id="F4IK92"/>
<dbReference type="PaxDb" id="3702-AT2G07170.1"/>
<dbReference type="ProteomicsDB" id="245203"/>
<dbReference type="EnsemblPlants" id="AT2G07170.1">
    <property type="protein sequence ID" value="AT2G07170.1"/>
    <property type="gene ID" value="AT2G07170"/>
</dbReference>
<dbReference type="GeneID" id="815286"/>
<dbReference type="Gramene" id="AT2G07170.1">
    <property type="protein sequence ID" value="AT2G07170.1"/>
    <property type="gene ID" value="AT2G07170"/>
</dbReference>
<dbReference type="KEGG" id="ath:AT2G07170"/>
<dbReference type="Araport" id="AT2G07170"/>
<dbReference type="TAIR" id="AT2G07170"/>
<dbReference type="eggNOG" id="ENOG502QUFS">
    <property type="taxonomic scope" value="Eukaryota"/>
</dbReference>
<dbReference type="HOGENOM" id="CLU_019435_0_0_1"/>
<dbReference type="InParanoid" id="F4IK92"/>
<dbReference type="OMA" id="GYEYVPM"/>
<dbReference type="PRO" id="PR:F4IK92"/>
<dbReference type="Proteomes" id="UP000006548">
    <property type="component" value="Chromosome 2"/>
</dbReference>
<dbReference type="ExpressionAtlas" id="F4IK92">
    <property type="expression patterns" value="baseline and differential"/>
</dbReference>
<dbReference type="GO" id="GO:0005874">
    <property type="term" value="C:microtubule"/>
    <property type="evidence" value="ECO:0007669"/>
    <property type="project" value="InterPro"/>
</dbReference>
<dbReference type="GO" id="GO:0008017">
    <property type="term" value="F:microtubule binding"/>
    <property type="evidence" value="ECO:0007669"/>
    <property type="project" value="InterPro"/>
</dbReference>
<dbReference type="FunFam" id="1.25.10.10:FF:001130">
    <property type="entry name" value="TORTIFOLIA1-like protein 2"/>
    <property type="match status" value="1"/>
</dbReference>
<dbReference type="Gene3D" id="1.25.10.10">
    <property type="entry name" value="Leucine-rich Repeat Variant"/>
    <property type="match status" value="1"/>
</dbReference>
<dbReference type="InterPro" id="IPR011989">
    <property type="entry name" value="ARM-like"/>
</dbReference>
<dbReference type="InterPro" id="IPR016024">
    <property type="entry name" value="ARM-type_fold"/>
</dbReference>
<dbReference type="InterPro" id="IPR033337">
    <property type="entry name" value="TORTIFOLIA1/SINE1-2"/>
</dbReference>
<dbReference type="PANTHER" id="PTHR31355">
    <property type="entry name" value="MICROTUBULE-ASSOCIATED PROTEIN TORTIFOLIA1"/>
    <property type="match status" value="1"/>
</dbReference>
<dbReference type="PANTHER" id="PTHR31355:SF22">
    <property type="entry name" value="TORTIFOLIA1-LIKE PROTEIN 2"/>
    <property type="match status" value="1"/>
</dbReference>
<dbReference type="Pfam" id="PF24713">
    <property type="entry name" value="TOR1L1_C"/>
    <property type="match status" value="1"/>
</dbReference>
<dbReference type="Pfam" id="PF24714">
    <property type="entry name" value="TOR1L1_N"/>
    <property type="match status" value="1"/>
</dbReference>
<dbReference type="SUPFAM" id="SSF48371">
    <property type="entry name" value="ARM repeat"/>
    <property type="match status" value="1"/>
</dbReference>
<feature type="chain" id="PRO_0000438405" description="TORTIFOLIA1-like protein 2">
    <location>
        <begin position="1"/>
        <end position="820"/>
    </location>
</feature>
<feature type="repeat" description="HEAT 1" evidence="1">
    <location>
        <begin position="61"/>
        <end position="98"/>
    </location>
</feature>
<feature type="repeat" description="HEAT 2" evidence="1">
    <location>
        <begin position="102"/>
        <end position="139"/>
    </location>
</feature>
<feature type="repeat" description="HEAT 3" evidence="1">
    <location>
        <begin position="146"/>
        <end position="183"/>
    </location>
</feature>
<feature type="repeat" description="HEAT 4" evidence="1">
    <location>
        <begin position="187"/>
        <end position="224"/>
    </location>
</feature>
<feature type="repeat" description="HEAT 5" evidence="1">
    <location>
        <begin position="228"/>
        <end position="265"/>
    </location>
</feature>
<feature type="region of interest" description="Disordered" evidence="2">
    <location>
        <begin position="304"/>
        <end position="325"/>
    </location>
</feature>
<feature type="region of interest" description="Disordered" evidence="2">
    <location>
        <begin position="357"/>
        <end position="377"/>
    </location>
</feature>
<feature type="region of interest" description="Disordered" evidence="2">
    <location>
        <begin position="584"/>
        <end position="644"/>
    </location>
</feature>
<feature type="compositionally biased region" description="Low complexity" evidence="2">
    <location>
        <begin position="304"/>
        <end position="321"/>
    </location>
</feature>
<feature type="compositionally biased region" description="Basic and acidic residues" evidence="2">
    <location>
        <begin position="367"/>
        <end position="377"/>
    </location>
</feature>
<feature type="compositionally biased region" description="Polar residues" evidence="2">
    <location>
        <begin position="584"/>
        <end position="613"/>
    </location>
</feature>
<keyword id="KW-1185">Reference proteome</keyword>
<keyword id="KW-0677">Repeat</keyword>
<comment type="sequence caution" evidence="4">
    <conflict type="erroneous gene model prediction">
        <sequence resource="EMBL-CDS" id="AAC69120"/>
    </conflict>
</comment>
<organism evidence="7">
    <name type="scientific">Arabidopsis thaliana</name>
    <name type="common">Mouse-ear cress</name>
    <dbReference type="NCBI Taxonomy" id="3702"/>
    <lineage>
        <taxon>Eukaryota</taxon>
        <taxon>Viridiplantae</taxon>
        <taxon>Streptophyta</taxon>
        <taxon>Embryophyta</taxon>
        <taxon>Tracheophyta</taxon>
        <taxon>Spermatophyta</taxon>
        <taxon>Magnoliopsida</taxon>
        <taxon>eudicotyledons</taxon>
        <taxon>Gunneridae</taxon>
        <taxon>Pentapetalae</taxon>
        <taxon>rosids</taxon>
        <taxon>malvids</taxon>
        <taxon>Brassicales</taxon>
        <taxon>Brassicaceae</taxon>
        <taxon>Camelineae</taxon>
        <taxon>Arabidopsis</taxon>
    </lineage>
</organism>
<accession>F4IK92</accession>
<accession>Q9ZV77</accession>